<gene>
    <name evidence="1" type="primary">rpsE</name>
    <name type="ordered locus">DvMF_0096</name>
</gene>
<feature type="chain" id="PRO_1000140856" description="Small ribosomal subunit protein uS5">
    <location>
        <begin position="1"/>
        <end position="163"/>
    </location>
</feature>
<feature type="domain" description="S5 DRBM" evidence="1">
    <location>
        <begin position="8"/>
        <end position="71"/>
    </location>
</feature>
<keyword id="KW-0687">Ribonucleoprotein</keyword>
<keyword id="KW-0689">Ribosomal protein</keyword>
<keyword id="KW-0694">RNA-binding</keyword>
<keyword id="KW-0699">rRNA-binding</keyword>
<sequence>MEQNEFGLVEKIVYLNRVAKVVKGGRRFSFSALVVVGDAKGAVGFGLGKAQEVPEALRKATERAKKDMVQIPLVDGTLPYEILGEFGAGCVMLKPASKGTGIIAGGAVRAVMEAVGVTDVLAKAIGTNNPHNVLRATMAGLTSLRSAEYVSQLRGMKLEAPRK</sequence>
<evidence type="ECO:0000255" key="1">
    <source>
        <dbReference type="HAMAP-Rule" id="MF_01307"/>
    </source>
</evidence>
<evidence type="ECO:0000305" key="2"/>
<reference key="1">
    <citation type="submission" date="2008-10" db="EMBL/GenBank/DDBJ databases">
        <title>Complete sequence of Desulfovibrio vulgaris str. 'Miyazaki F'.</title>
        <authorList>
            <person name="Lucas S."/>
            <person name="Copeland A."/>
            <person name="Lapidus A."/>
            <person name="Glavina del Rio T."/>
            <person name="Dalin E."/>
            <person name="Tice H."/>
            <person name="Bruce D."/>
            <person name="Goodwin L."/>
            <person name="Pitluck S."/>
            <person name="Sims D."/>
            <person name="Brettin T."/>
            <person name="Detter J.C."/>
            <person name="Han C."/>
            <person name="Larimer F."/>
            <person name="Land M."/>
            <person name="Hauser L."/>
            <person name="Kyrpides N."/>
            <person name="Mikhailova N."/>
            <person name="Hazen T.C."/>
            <person name="Richardson P."/>
        </authorList>
    </citation>
    <scope>NUCLEOTIDE SEQUENCE [LARGE SCALE GENOMIC DNA]</scope>
    <source>
        <strain>DSM 19637 / Miyazaki F</strain>
    </source>
</reference>
<protein>
    <recommendedName>
        <fullName evidence="1">Small ribosomal subunit protein uS5</fullName>
    </recommendedName>
    <alternativeName>
        <fullName evidence="2">30S ribosomal protein S5</fullName>
    </alternativeName>
</protein>
<organism>
    <name type="scientific">Nitratidesulfovibrio vulgaris (strain DSM 19637 / Miyazaki F)</name>
    <name type="common">Desulfovibrio vulgaris</name>
    <dbReference type="NCBI Taxonomy" id="883"/>
    <lineage>
        <taxon>Bacteria</taxon>
        <taxon>Pseudomonadati</taxon>
        <taxon>Thermodesulfobacteriota</taxon>
        <taxon>Desulfovibrionia</taxon>
        <taxon>Desulfovibrionales</taxon>
        <taxon>Desulfovibrionaceae</taxon>
        <taxon>Nitratidesulfovibrio</taxon>
    </lineage>
</organism>
<name>RS5_NITV9</name>
<dbReference type="EMBL" id="CP001197">
    <property type="protein sequence ID" value="ACL07057.1"/>
    <property type="molecule type" value="Genomic_DNA"/>
</dbReference>
<dbReference type="SMR" id="B8DNB3"/>
<dbReference type="STRING" id="883.DvMF_0096"/>
<dbReference type="KEGG" id="dvm:DvMF_0096"/>
<dbReference type="eggNOG" id="COG0098">
    <property type="taxonomic scope" value="Bacteria"/>
</dbReference>
<dbReference type="HOGENOM" id="CLU_065898_2_2_7"/>
<dbReference type="OrthoDB" id="9809045at2"/>
<dbReference type="GO" id="GO:0015935">
    <property type="term" value="C:small ribosomal subunit"/>
    <property type="evidence" value="ECO:0007669"/>
    <property type="project" value="InterPro"/>
</dbReference>
<dbReference type="GO" id="GO:0019843">
    <property type="term" value="F:rRNA binding"/>
    <property type="evidence" value="ECO:0007669"/>
    <property type="project" value="UniProtKB-UniRule"/>
</dbReference>
<dbReference type="GO" id="GO:0003735">
    <property type="term" value="F:structural constituent of ribosome"/>
    <property type="evidence" value="ECO:0007669"/>
    <property type="project" value="InterPro"/>
</dbReference>
<dbReference type="GO" id="GO:0006412">
    <property type="term" value="P:translation"/>
    <property type="evidence" value="ECO:0007669"/>
    <property type="project" value="UniProtKB-UniRule"/>
</dbReference>
<dbReference type="FunFam" id="3.30.160.20:FF:000001">
    <property type="entry name" value="30S ribosomal protein S5"/>
    <property type="match status" value="1"/>
</dbReference>
<dbReference type="FunFam" id="3.30.230.10:FF:000002">
    <property type="entry name" value="30S ribosomal protein S5"/>
    <property type="match status" value="1"/>
</dbReference>
<dbReference type="Gene3D" id="3.30.160.20">
    <property type="match status" value="1"/>
</dbReference>
<dbReference type="Gene3D" id="3.30.230.10">
    <property type="match status" value="1"/>
</dbReference>
<dbReference type="HAMAP" id="MF_01307_B">
    <property type="entry name" value="Ribosomal_uS5_B"/>
    <property type="match status" value="1"/>
</dbReference>
<dbReference type="InterPro" id="IPR020568">
    <property type="entry name" value="Ribosomal_Su5_D2-typ_SF"/>
</dbReference>
<dbReference type="InterPro" id="IPR000851">
    <property type="entry name" value="Ribosomal_uS5"/>
</dbReference>
<dbReference type="InterPro" id="IPR005712">
    <property type="entry name" value="Ribosomal_uS5_bac-type"/>
</dbReference>
<dbReference type="InterPro" id="IPR005324">
    <property type="entry name" value="Ribosomal_uS5_C"/>
</dbReference>
<dbReference type="InterPro" id="IPR013810">
    <property type="entry name" value="Ribosomal_uS5_N"/>
</dbReference>
<dbReference type="InterPro" id="IPR018192">
    <property type="entry name" value="Ribosomal_uS5_N_CS"/>
</dbReference>
<dbReference type="InterPro" id="IPR014721">
    <property type="entry name" value="Ribsml_uS5_D2-typ_fold_subgr"/>
</dbReference>
<dbReference type="NCBIfam" id="TIGR01021">
    <property type="entry name" value="rpsE_bact"/>
    <property type="match status" value="1"/>
</dbReference>
<dbReference type="PANTHER" id="PTHR48277">
    <property type="entry name" value="MITOCHONDRIAL RIBOSOMAL PROTEIN S5"/>
    <property type="match status" value="1"/>
</dbReference>
<dbReference type="PANTHER" id="PTHR48277:SF1">
    <property type="entry name" value="MITOCHONDRIAL RIBOSOMAL PROTEIN S5"/>
    <property type="match status" value="1"/>
</dbReference>
<dbReference type="Pfam" id="PF00333">
    <property type="entry name" value="Ribosomal_S5"/>
    <property type="match status" value="1"/>
</dbReference>
<dbReference type="Pfam" id="PF03719">
    <property type="entry name" value="Ribosomal_S5_C"/>
    <property type="match status" value="1"/>
</dbReference>
<dbReference type="SUPFAM" id="SSF54768">
    <property type="entry name" value="dsRNA-binding domain-like"/>
    <property type="match status" value="1"/>
</dbReference>
<dbReference type="SUPFAM" id="SSF54211">
    <property type="entry name" value="Ribosomal protein S5 domain 2-like"/>
    <property type="match status" value="1"/>
</dbReference>
<dbReference type="PROSITE" id="PS00585">
    <property type="entry name" value="RIBOSOMAL_S5"/>
    <property type="match status" value="1"/>
</dbReference>
<dbReference type="PROSITE" id="PS50881">
    <property type="entry name" value="S5_DSRBD"/>
    <property type="match status" value="1"/>
</dbReference>
<proteinExistence type="inferred from homology"/>
<accession>B8DNB3</accession>
<comment type="function">
    <text evidence="1">With S4 and S12 plays an important role in translational accuracy.</text>
</comment>
<comment type="function">
    <text evidence="1">Located at the back of the 30S subunit body where it stabilizes the conformation of the head with respect to the body.</text>
</comment>
<comment type="subunit">
    <text evidence="1">Part of the 30S ribosomal subunit. Contacts proteins S4 and S8.</text>
</comment>
<comment type="domain">
    <text>The N-terminal domain interacts with the head of the 30S subunit; the C-terminal domain interacts with the body and contacts protein S4. The interaction surface between S4 and S5 is involved in control of translational fidelity.</text>
</comment>
<comment type="similarity">
    <text evidence="1">Belongs to the universal ribosomal protein uS5 family.</text>
</comment>